<name>ISPH_ACIAD</name>
<accession>Q9RBJ0</accession>
<sequence>MEIVLANPRGFCAGVDRAIAIVNRALECFNPPIYVRHEVVHNKFVVDDLRQRGAIFVDELDQVPDDSIVIFSAHGVSKAVQQEAEHRGLKVFDATCPLVTKVHIEVTKYAREGTEAILIGHEGHPEVEGTMGQYDKSKGGHIYLVEDEADVEALAVNHPEKLAFVTQTTLSIDDTAKVIDALRTKFPQIQGPRKDDICYATQNRQDAVRDLASRCDVVLVVGSPNSSNSNRLRELAERMGKAAYLVDNADQLEQQWFDGVAKIGVTAGASAPEILIKQVIQRLQDWGAEAPKELDGREENITFSLPKELRIQVTQA</sequence>
<evidence type="ECO:0000255" key="1">
    <source>
        <dbReference type="HAMAP-Rule" id="MF_00191"/>
    </source>
</evidence>
<gene>
    <name evidence="1" type="primary">ispH</name>
    <name type="synonym">lytB</name>
    <name type="ordered locus">ACIAD3322</name>
</gene>
<dbReference type="EC" id="1.17.7.4" evidence="1"/>
<dbReference type="EMBL" id="AF027189">
    <property type="protein sequence ID" value="AAD55804.1"/>
    <property type="molecule type" value="Genomic_DNA"/>
</dbReference>
<dbReference type="EMBL" id="CR543861">
    <property type="protein sequence ID" value="CAG69994.1"/>
    <property type="molecule type" value="Genomic_DNA"/>
</dbReference>
<dbReference type="RefSeq" id="WP_004923824.1">
    <property type="nucleotide sequence ID" value="NC_005966.1"/>
</dbReference>
<dbReference type="SMR" id="Q9RBJ0"/>
<dbReference type="STRING" id="202950.GCA_001485005_02165"/>
<dbReference type="GeneID" id="45235522"/>
<dbReference type="KEGG" id="aci:ACIAD3322"/>
<dbReference type="eggNOG" id="COG0761">
    <property type="taxonomic scope" value="Bacteria"/>
</dbReference>
<dbReference type="HOGENOM" id="CLU_027486_1_0_6"/>
<dbReference type="OrthoDB" id="9804068at2"/>
<dbReference type="BioCyc" id="ASP62977:ACIAD_RS15035-MONOMER"/>
<dbReference type="UniPathway" id="UPA00056">
    <property type="reaction ID" value="UER00097"/>
</dbReference>
<dbReference type="UniPathway" id="UPA00059">
    <property type="reaction ID" value="UER00105"/>
</dbReference>
<dbReference type="Proteomes" id="UP000000430">
    <property type="component" value="Chromosome"/>
</dbReference>
<dbReference type="GO" id="GO:0051539">
    <property type="term" value="F:4 iron, 4 sulfur cluster binding"/>
    <property type="evidence" value="ECO:0007669"/>
    <property type="project" value="UniProtKB-UniRule"/>
</dbReference>
<dbReference type="GO" id="GO:0051745">
    <property type="term" value="F:4-hydroxy-3-methylbut-2-enyl diphosphate reductase activity"/>
    <property type="evidence" value="ECO:0007669"/>
    <property type="project" value="UniProtKB-UniRule"/>
</dbReference>
<dbReference type="GO" id="GO:0046872">
    <property type="term" value="F:metal ion binding"/>
    <property type="evidence" value="ECO:0007669"/>
    <property type="project" value="UniProtKB-KW"/>
</dbReference>
<dbReference type="GO" id="GO:0050992">
    <property type="term" value="P:dimethylallyl diphosphate biosynthetic process"/>
    <property type="evidence" value="ECO:0007669"/>
    <property type="project" value="UniProtKB-UniRule"/>
</dbReference>
<dbReference type="GO" id="GO:0019288">
    <property type="term" value="P:isopentenyl diphosphate biosynthetic process, methylerythritol 4-phosphate pathway"/>
    <property type="evidence" value="ECO:0007669"/>
    <property type="project" value="UniProtKB-UniRule"/>
</dbReference>
<dbReference type="GO" id="GO:0016114">
    <property type="term" value="P:terpenoid biosynthetic process"/>
    <property type="evidence" value="ECO:0007669"/>
    <property type="project" value="UniProtKB-UniRule"/>
</dbReference>
<dbReference type="CDD" id="cd13944">
    <property type="entry name" value="lytB_ispH"/>
    <property type="match status" value="1"/>
</dbReference>
<dbReference type="Gene3D" id="3.40.50.11270">
    <property type="match status" value="1"/>
</dbReference>
<dbReference type="Gene3D" id="3.40.1010.20">
    <property type="entry name" value="4-hydroxy-3-methylbut-2-enyl diphosphate reductase, catalytic domain"/>
    <property type="match status" value="2"/>
</dbReference>
<dbReference type="HAMAP" id="MF_00191">
    <property type="entry name" value="IspH"/>
    <property type="match status" value="1"/>
</dbReference>
<dbReference type="InterPro" id="IPR003451">
    <property type="entry name" value="LytB/IspH"/>
</dbReference>
<dbReference type="NCBIfam" id="TIGR00216">
    <property type="entry name" value="ispH_lytB"/>
    <property type="match status" value="1"/>
</dbReference>
<dbReference type="NCBIfam" id="NF002188">
    <property type="entry name" value="PRK01045.1-2"/>
    <property type="match status" value="1"/>
</dbReference>
<dbReference type="NCBIfam" id="NF002190">
    <property type="entry name" value="PRK01045.1-4"/>
    <property type="match status" value="1"/>
</dbReference>
<dbReference type="PANTHER" id="PTHR30426">
    <property type="entry name" value="4-HYDROXY-3-METHYLBUT-2-ENYL DIPHOSPHATE REDUCTASE"/>
    <property type="match status" value="1"/>
</dbReference>
<dbReference type="PANTHER" id="PTHR30426:SF0">
    <property type="entry name" value="4-HYDROXY-3-METHYLBUT-2-ENYL DIPHOSPHATE REDUCTASE"/>
    <property type="match status" value="1"/>
</dbReference>
<dbReference type="Pfam" id="PF02401">
    <property type="entry name" value="LYTB"/>
    <property type="match status" value="1"/>
</dbReference>
<comment type="function">
    <text evidence="1">Catalyzes the conversion of 1-hydroxy-2-methyl-2-(E)-butenyl 4-diphosphate (HMBPP) into a mixture of isopentenyl diphosphate (IPP) and dimethylallyl diphosphate (DMAPP). Acts in the terminal step of the DOXP/MEP pathway for isoprenoid precursor biosynthesis.</text>
</comment>
<comment type="catalytic activity">
    <reaction evidence="1">
        <text>isopentenyl diphosphate + 2 oxidized [2Fe-2S]-[ferredoxin] + H2O = (2E)-4-hydroxy-3-methylbut-2-enyl diphosphate + 2 reduced [2Fe-2S]-[ferredoxin] + 2 H(+)</text>
        <dbReference type="Rhea" id="RHEA:24488"/>
        <dbReference type="Rhea" id="RHEA-COMP:10000"/>
        <dbReference type="Rhea" id="RHEA-COMP:10001"/>
        <dbReference type="ChEBI" id="CHEBI:15377"/>
        <dbReference type="ChEBI" id="CHEBI:15378"/>
        <dbReference type="ChEBI" id="CHEBI:33737"/>
        <dbReference type="ChEBI" id="CHEBI:33738"/>
        <dbReference type="ChEBI" id="CHEBI:128753"/>
        <dbReference type="ChEBI" id="CHEBI:128769"/>
        <dbReference type="EC" id="1.17.7.4"/>
    </reaction>
</comment>
<comment type="catalytic activity">
    <reaction evidence="1">
        <text>dimethylallyl diphosphate + 2 oxidized [2Fe-2S]-[ferredoxin] + H2O = (2E)-4-hydroxy-3-methylbut-2-enyl diphosphate + 2 reduced [2Fe-2S]-[ferredoxin] + 2 H(+)</text>
        <dbReference type="Rhea" id="RHEA:24825"/>
        <dbReference type="Rhea" id="RHEA-COMP:10000"/>
        <dbReference type="Rhea" id="RHEA-COMP:10001"/>
        <dbReference type="ChEBI" id="CHEBI:15377"/>
        <dbReference type="ChEBI" id="CHEBI:15378"/>
        <dbReference type="ChEBI" id="CHEBI:33737"/>
        <dbReference type="ChEBI" id="CHEBI:33738"/>
        <dbReference type="ChEBI" id="CHEBI:57623"/>
        <dbReference type="ChEBI" id="CHEBI:128753"/>
        <dbReference type="EC" id="1.17.7.4"/>
    </reaction>
</comment>
<comment type="cofactor">
    <cofactor evidence="1">
        <name>[4Fe-4S] cluster</name>
        <dbReference type="ChEBI" id="CHEBI:49883"/>
    </cofactor>
    <text evidence="1">Binds 1 [4Fe-4S] cluster per subunit.</text>
</comment>
<comment type="pathway">
    <text evidence="1">Isoprenoid biosynthesis; dimethylallyl diphosphate biosynthesis; dimethylallyl diphosphate from (2E)-4-hydroxy-3-methylbutenyl diphosphate: step 1/1.</text>
</comment>
<comment type="pathway">
    <text evidence="1">Isoprenoid biosynthesis; isopentenyl diphosphate biosynthesis via DXP pathway; isopentenyl diphosphate from 1-deoxy-D-xylulose 5-phosphate: step 6/6.</text>
</comment>
<comment type="similarity">
    <text evidence="1">Belongs to the IspH family.</text>
</comment>
<protein>
    <recommendedName>
        <fullName evidence="1">4-hydroxy-3-methylbut-2-enyl diphosphate reductase</fullName>
        <shortName evidence="1">HMBPP reductase</shortName>
        <ecNumber evidence="1">1.17.7.4</ecNumber>
    </recommendedName>
</protein>
<proteinExistence type="inferred from homology"/>
<organism>
    <name type="scientific">Acinetobacter baylyi (strain ATCC 33305 / BD413 / ADP1)</name>
    <dbReference type="NCBI Taxonomy" id="62977"/>
    <lineage>
        <taxon>Bacteria</taxon>
        <taxon>Pseudomonadati</taxon>
        <taxon>Pseudomonadota</taxon>
        <taxon>Gammaproteobacteria</taxon>
        <taxon>Moraxellales</taxon>
        <taxon>Moraxellaceae</taxon>
        <taxon>Acinetobacter</taxon>
    </lineage>
</organism>
<feature type="chain" id="PRO_0000128762" description="4-hydroxy-3-methylbut-2-enyl diphosphate reductase">
    <location>
        <begin position="1"/>
        <end position="316"/>
    </location>
</feature>
<feature type="active site" description="Proton donor" evidence="1">
    <location>
        <position position="126"/>
    </location>
</feature>
<feature type="binding site" evidence="1">
    <location>
        <position position="12"/>
    </location>
    <ligand>
        <name>[4Fe-4S] cluster</name>
        <dbReference type="ChEBI" id="CHEBI:49883"/>
    </ligand>
</feature>
<feature type="binding site" evidence="1">
    <location>
        <position position="41"/>
    </location>
    <ligand>
        <name>(2E)-4-hydroxy-3-methylbut-2-enyl diphosphate</name>
        <dbReference type="ChEBI" id="CHEBI:128753"/>
    </ligand>
</feature>
<feature type="binding site" evidence="1">
    <location>
        <position position="41"/>
    </location>
    <ligand>
        <name>dimethylallyl diphosphate</name>
        <dbReference type="ChEBI" id="CHEBI:57623"/>
    </ligand>
</feature>
<feature type="binding site" evidence="1">
    <location>
        <position position="41"/>
    </location>
    <ligand>
        <name>isopentenyl diphosphate</name>
        <dbReference type="ChEBI" id="CHEBI:128769"/>
    </ligand>
</feature>
<feature type="binding site" evidence="1">
    <location>
        <position position="74"/>
    </location>
    <ligand>
        <name>(2E)-4-hydroxy-3-methylbut-2-enyl diphosphate</name>
        <dbReference type="ChEBI" id="CHEBI:128753"/>
    </ligand>
</feature>
<feature type="binding site" evidence="1">
    <location>
        <position position="74"/>
    </location>
    <ligand>
        <name>dimethylallyl diphosphate</name>
        <dbReference type="ChEBI" id="CHEBI:57623"/>
    </ligand>
</feature>
<feature type="binding site" evidence="1">
    <location>
        <position position="74"/>
    </location>
    <ligand>
        <name>isopentenyl diphosphate</name>
        <dbReference type="ChEBI" id="CHEBI:128769"/>
    </ligand>
</feature>
<feature type="binding site" evidence="1">
    <location>
        <position position="96"/>
    </location>
    <ligand>
        <name>[4Fe-4S] cluster</name>
        <dbReference type="ChEBI" id="CHEBI:49883"/>
    </ligand>
</feature>
<feature type="binding site" evidence="1">
    <location>
        <position position="124"/>
    </location>
    <ligand>
        <name>(2E)-4-hydroxy-3-methylbut-2-enyl diphosphate</name>
        <dbReference type="ChEBI" id="CHEBI:128753"/>
    </ligand>
</feature>
<feature type="binding site" evidence="1">
    <location>
        <position position="124"/>
    </location>
    <ligand>
        <name>dimethylallyl diphosphate</name>
        <dbReference type="ChEBI" id="CHEBI:57623"/>
    </ligand>
</feature>
<feature type="binding site" evidence="1">
    <location>
        <position position="124"/>
    </location>
    <ligand>
        <name>isopentenyl diphosphate</name>
        <dbReference type="ChEBI" id="CHEBI:128769"/>
    </ligand>
</feature>
<feature type="binding site" evidence="1">
    <location>
        <position position="168"/>
    </location>
    <ligand>
        <name>(2E)-4-hydroxy-3-methylbut-2-enyl diphosphate</name>
        <dbReference type="ChEBI" id="CHEBI:128753"/>
    </ligand>
</feature>
<feature type="binding site" evidence="1">
    <location>
        <position position="198"/>
    </location>
    <ligand>
        <name>[4Fe-4S] cluster</name>
        <dbReference type="ChEBI" id="CHEBI:49883"/>
    </ligand>
</feature>
<feature type="binding site" evidence="1">
    <location>
        <position position="226"/>
    </location>
    <ligand>
        <name>(2E)-4-hydroxy-3-methylbut-2-enyl diphosphate</name>
        <dbReference type="ChEBI" id="CHEBI:128753"/>
    </ligand>
</feature>
<feature type="binding site" evidence="1">
    <location>
        <position position="226"/>
    </location>
    <ligand>
        <name>dimethylallyl diphosphate</name>
        <dbReference type="ChEBI" id="CHEBI:57623"/>
    </ligand>
</feature>
<feature type="binding site" evidence="1">
    <location>
        <position position="226"/>
    </location>
    <ligand>
        <name>isopentenyl diphosphate</name>
        <dbReference type="ChEBI" id="CHEBI:128769"/>
    </ligand>
</feature>
<feature type="binding site" evidence="1">
    <location>
        <position position="227"/>
    </location>
    <ligand>
        <name>(2E)-4-hydroxy-3-methylbut-2-enyl diphosphate</name>
        <dbReference type="ChEBI" id="CHEBI:128753"/>
    </ligand>
</feature>
<feature type="binding site" evidence="1">
    <location>
        <position position="227"/>
    </location>
    <ligand>
        <name>dimethylallyl diphosphate</name>
        <dbReference type="ChEBI" id="CHEBI:57623"/>
    </ligand>
</feature>
<feature type="binding site" evidence="1">
    <location>
        <position position="227"/>
    </location>
    <ligand>
        <name>isopentenyl diphosphate</name>
        <dbReference type="ChEBI" id="CHEBI:128769"/>
    </ligand>
</feature>
<feature type="binding site" evidence="1">
    <location>
        <position position="228"/>
    </location>
    <ligand>
        <name>(2E)-4-hydroxy-3-methylbut-2-enyl diphosphate</name>
        <dbReference type="ChEBI" id="CHEBI:128753"/>
    </ligand>
</feature>
<feature type="binding site" evidence="1">
    <location>
        <position position="228"/>
    </location>
    <ligand>
        <name>dimethylallyl diphosphate</name>
        <dbReference type="ChEBI" id="CHEBI:57623"/>
    </ligand>
</feature>
<feature type="binding site" evidence="1">
    <location>
        <position position="228"/>
    </location>
    <ligand>
        <name>isopentenyl diphosphate</name>
        <dbReference type="ChEBI" id="CHEBI:128769"/>
    </ligand>
</feature>
<feature type="binding site" evidence="1">
    <location>
        <position position="270"/>
    </location>
    <ligand>
        <name>(2E)-4-hydroxy-3-methylbut-2-enyl diphosphate</name>
        <dbReference type="ChEBI" id="CHEBI:128753"/>
    </ligand>
</feature>
<feature type="binding site" evidence="1">
    <location>
        <position position="270"/>
    </location>
    <ligand>
        <name>dimethylallyl diphosphate</name>
        <dbReference type="ChEBI" id="CHEBI:57623"/>
    </ligand>
</feature>
<feature type="binding site" evidence="1">
    <location>
        <position position="270"/>
    </location>
    <ligand>
        <name>isopentenyl diphosphate</name>
        <dbReference type="ChEBI" id="CHEBI:128769"/>
    </ligand>
</feature>
<reference key="1">
    <citation type="journal article" date="2000" name="Arch. Microbiol.">
        <title>ComB, a novel competence gene required for natural transformation of Acinetobacter sp. BD413: identification, characterization and analysis of growth phase-dependent regulation.</title>
        <authorList>
            <person name="Herzberg C."/>
            <person name="Friedrich A."/>
            <person name="Averhoff B."/>
        </authorList>
    </citation>
    <scope>NUCLEOTIDE SEQUENCE [GENOMIC DNA]</scope>
</reference>
<reference key="2">
    <citation type="journal article" date="2004" name="Nucleic Acids Res.">
        <title>Unique features revealed by the genome sequence of Acinetobacter sp. ADP1, a versatile and naturally transformation competent bacterium.</title>
        <authorList>
            <person name="Barbe V."/>
            <person name="Vallenet D."/>
            <person name="Fonknechten N."/>
            <person name="Kreimeyer A."/>
            <person name="Oztas S."/>
            <person name="Labarre L."/>
            <person name="Cruveiller S."/>
            <person name="Robert C."/>
            <person name="Duprat S."/>
            <person name="Wincker P."/>
            <person name="Ornston L.N."/>
            <person name="Weissenbach J."/>
            <person name="Marliere P."/>
            <person name="Cohen G.N."/>
            <person name="Medigue C."/>
        </authorList>
    </citation>
    <scope>NUCLEOTIDE SEQUENCE [LARGE SCALE GENOMIC DNA]</scope>
    <source>
        <strain>ATCC 33305 / BD413 / ADP1</strain>
    </source>
</reference>
<keyword id="KW-0004">4Fe-4S</keyword>
<keyword id="KW-0408">Iron</keyword>
<keyword id="KW-0411">Iron-sulfur</keyword>
<keyword id="KW-0414">Isoprene biosynthesis</keyword>
<keyword id="KW-0479">Metal-binding</keyword>
<keyword id="KW-0560">Oxidoreductase</keyword>